<organism>
    <name type="scientific">Streptococcus thermophilus (strain ATCC BAA-491 / LMD-9)</name>
    <dbReference type="NCBI Taxonomy" id="322159"/>
    <lineage>
        <taxon>Bacteria</taxon>
        <taxon>Bacillati</taxon>
        <taxon>Bacillota</taxon>
        <taxon>Bacilli</taxon>
        <taxon>Lactobacillales</taxon>
        <taxon>Streptococcaceae</taxon>
        <taxon>Streptococcus</taxon>
    </lineage>
</organism>
<proteinExistence type="inferred from homology"/>
<dbReference type="EC" id="2.1.1.177" evidence="1"/>
<dbReference type="EMBL" id="CP000419">
    <property type="protein sequence ID" value="ABJ67103.1"/>
    <property type="status" value="ALT_INIT"/>
    <property type="molecule type" value="Genomic_DNA"/>
</dbReference>
<dbReference type="RefSeq" id="WP_011681766.1">
    <property type="nucleotide sequence ID" value="NC_008532.1"/>
</dbReference>
<dbReference type="SMR" id="Q03I69"/>
<dbReference type="KEGG" id="ste:STER_2001"/>
<dbReference type="HOGENOM" id="CLU_100552_0_0_9"/>
<dbReference type="GO" id="GO:0005737">
    <property type="term" value="C:cytoplasm"/>
    <property type="evidence" value="ECO:0007669"/>
    <property type="project" value="UniProtKB-SubCell"/>
</dbReference>
<dbReference type="GO" id="GO:0070038">
    <property type="term" value="F:rRNA (pseudouridine-N3-)-methyltransferase activity"/>
    <property type="evidence" value="ECO:0007669"/>
    <property type="project" value="UniProtKB-UniRule"/>
</dbReference>
<dbReference type="CDD" id="cd18081">
    <property type="entry name" value="RlmH-like"/>
    <property type="match status" value="1"/>
</dbReference>
<dbReference type="Gene3D" id="3.40.1280.10">
    <property type="match status" value="1"/>
</dbReference>
<dbReference type="HAMAP" id="MF_00658">
    <property type="entry name" value="23SrRNA_methyltr_H"/>
    <property type="match status" value="1"/>
</dbReference>
<dbReference type="InterPro" id="IPR029028">
    <property type="entry name" value="Alpha/beta_knot_MTases"/>
</dbReference>
<dbReference type="InterPro" id="IPR003742">
    <property type="entry name" value="RlmH-like"/>
</dbReference>
<dbReference type="InterPro" id="IPR029026">
    <property type="entry name" value="tRNA_m1G_MTases_N"/>
</dbReference>
<dbReference type="NCBIfam" id="NF000985">
    <property type="entry name" value="PRK00103.1-3"/>
    <property type="match status" value="1"/>
</dbReference>
<dbReference type="NCBIfam" id="TIGR00246">
    <property type="entry name" value="tRNA_RlmH_YbeA"/>
    <property type="match status" value="1"/>
</dbReference>
<dbReference type="PANTHER" id="PTHR33603">
    <property type="entry name" value="METHYLTRANSFERASE"/>
    <property type="match status" value="1"/>
</dbReference>
<dbReference type="PANTHER" id="PTHR33603:SF1">
    <property type="entry name" value="RIBOSOMAL RNA LARGE SUBUNIT METHYLTRANSFERASE H"/>
    <property type="match status" value="1"/>
</dbReference>
<dbReference type="Pfam" id="PF02590">
    <property type="entry name" value="SPOUT_MTase"/>
    <property type="match status" value="1"/>
</dbReference>
<dbReference type="PIRSF" id="PIRSF004505">
    <property type="entry name" value="MT_bac"/>
    <property type="match status" value="1"/>
</dbReference>
<dbReference type="SUPFAM" id="SSF75217">
    <property type="entry name" value="alpha/beta knot"/>
    <property type="match status" value="1"/>
</dbReference>
<gene>
    <name evidence="1" type="primary">rlmH</name>
    <name type="ordered locus">STER_2001</name>
</gene>
<accession>Q03I69</accession>
<name>RLMH_STRTD</name>
<comment type="function">
    <text evidence="1">Specifically methylates the pseudouridine at position 1915 (m3Psi1915) in 23S rRNA.</text>
</comment>
<comment type="catalytic activity">
    <reaction evidence="1">
        <text>pseudouridine(1915) in 23S rRNA + S-adenosyl-L-methionine = N(3)-methylpseudouridine(1915) in 23S rRNA + S-adenosyl-L-homocysteine + H(+)</text>
        <dbReference type="Rhea" id="RHEA:42752"/>
        <dbReference type="Rhea" id="RHEA-COMP:10221"/>
        <dbReference type="Rhea" id="RHEA-COMP:10222"/>
        <dbReference type="ChEBI" id="CHEBI:15378"/>
        <dbReference type="ChEBI" id="CHEBI:57856"/>
        <dbReference type="ChEBI" id="CHEBI:59789"/>
        <dbReference type="ChEBI" id="CHEBI:65314"/>
        <dbReference type="ChEBI" id="CHEBI:74486"/>
        <dbReference type="EC" id="2.1.1.177"/>
    </reaction>
</comment>
<comment type="subunit">
    <text evidence="1">Homodimer.</text>
</comment>
<comment type="subcellular location">
    <subcellularLocation>
        <location evidence="1">Cytoplasm</location>
    </subcellularLocation>
</comment>
<comment type="similarity">
    <text evidence="1">Belongs to the RNA methyltransferase RlmH family.</text>
</comment>
<comment type="sequence caution" evidence="2">
    <conflict type="erroneous initiation">
        <sequence resource="EMBL-CDS" id="ABJ67103"/>
    </conflict>
</comment>
<sequence length="159" mass="18084">MKVKLITVGKLKEKYLKDGIAEYIKRLGRFTKFESIELTDEKTPDNASESENKAILDKEGQRILAKVGDRDYVIALAIEGKQFPSEQFAKELEQATLRGYSDITFIIGGSLGLSPKVKKRANQLMSFGLLTFPHQLMRLVLVEQIYRAFMIQQGSPYHK</sequence>
<feature type="chain" id="PRO_0000366665" description="Ribosomal RNA large subunit methyltransferase H">
    <location>
        <begin position="1"/>
        <end position="159"/>
    </location>
</feature>
<feature type="binding site" evidence="1">
    <location>
        <position position="76"/>
    </location>
    <ligand>
        <name>S-adenosyl-L-methionine</name>
        <dbReference type="ChEBI" id="CHEBI:59789"/>
    </ligand>
</feature>
<feature type="binding site" evidence="1">
    <location>
        <position position="108"/>
    </location>
    <ligand>
        <name>S-adenosyl-L-methionine</name>
        <dbReference type="ChEBI" id="CHEBI:59789"/>
    </ligand>
</feature>
<feature type="binding site" evidence="1">
    <location>
        <begin position="127"/>
        <end position="132"/>
    </location>
    <ligand>
        <name>S-adenosyl-L-methionine</name>
        <dbReference type="ChEBI" id="CHEBI:59789"/>
    </ligand>
</feature>
<evidence type="ECO:0000255" key="1">
    <source>
        <dbReference type="HAMAP-Rule" id="MF_00658"/>
    </source>
</evidence>
<evidence type="ECO:0000305" key="2"/>
<protein>
    <recommendedName>
        <fullName evidence="1">Ribosomal RNA large subunit methyltransferase H</fullName>
        <ecNumber evidence="1">2.1.1.177</ecNumber>
    </recommendedName>
    <alternativeName>
        <fullName evidence="1">23S rRNA (pseudouridine1915-N3)-methyltransferase</fullName>
    </alternativeName>
    <alternativeName>
        <fullName evidence="1">23S rRNA m3Psi1915 methyltransferase</fullName>
    </alternativeName>
    <alternativeName>
        <fullName evidence="1">rRNA (pseudouridine-N3-)-methyltransferase RlmH</fullName>
    </alternativeName>
</protein>
<reference key="1">
    <citation type="journal article" date="2006" name="Proc. Natl. Acad. Sci. U.S.A.">
        <title>Comparative genomics of the lactic acid bacteria.</title>
        <authorList>
            <person name="Makarova K.S."/>
            <person name="Slesarev A."/>
            <person name="Wolf Y.I."/>
            <person name="Sorokin A."/>
            <person name="Mirkin B."/>
            <person name="Koonin E.V."/>
            <person name="Pavlov A."/>
            <person name="Pavlova N."/>
            <person name="Karamychev V."/>
            <person name="Polouchine N."/>
            <person name="Shakhova V."/>
            <person name="Grigoriev I."/>
            <person name="Lou Y."/>
            <person name="Rohksar D."/>
            <person name="Lucas S."/>
            <person name="Huang K."/>
            <person name="Goodstein D.M."/>
            <person name="Hawkins T."/>
            <person name="Plengvidhya V."/>
            <person name="Welker D."/>
            <person name="Hughes J."/>
            <person name="Goh Y."/>
            <person name="Benson A."/>
            <person name="Baldwin K."/>
            <person name="Lee J.-H."/>
            <person name="Diaz-Muniz I."/>
            <person name="Dosti B."/>
            <person name="Smeianov V."/>
            <person name="Wechter W."/>
            <person name="Barabote R."/>
            <person name="Lorca G."/>
            <person name="Altermann E."/>
            <person name="Barrangou R."/>
            <person name="Ganesan B."/>
            <person name="Xie Y."/>
            <person name="Rawsthorne H."/>
            <person name="Tamir D."/>
            <person name="Parker C."/>
            <person name="Breidt F."/>
            <person name="Broadbent J.R."/>
            <person name="Hutkins R."/>
            <person name="O'Sullivan D."/>
            <person name="Steele J."/>
            <person name="Unlu G."/>
            <person name="Saier M.H. Jr."/>
            <person name="Klaenhammer T."/>
            <person name="Richardson P."/>
            <person name="Kozyavkin S."/>
            <person name="Weimer B.C."/>
            <person name="Mills D.A."/>
        </authorList>
    </citation>
    <scope>NUCLEOTIDE SEQUENCE [LARGE SCALE GENOMIC DNA]</scope>
    <source>
        <strain>ATCC BAA-491 / LMD-9</strain>
    </source>
</reference>
<keyword id="KW-0963">Cytoplasm</keyword>
<keyword id="KW-0489">Methyltransferase</keyword>
<keyword id="KW-0698">rRNA processing</keyword>
<keyword id="KW-0949">S-adenosyl-L-methionine</keyword>
<keyword id="KW-0808">Transferase</keyword>